<comment type="function">
    <text evidence="1">Required for the insertion and/or proper folding and/or complex formation of integral membrane proteins into the membrane. Involved in integration of membrane proteins that insert both dependently and independently of the Sec translocase complex, as well as at least some lipoproteins. Aids folding of multispanning membrane proteins.</text>
</comment>
<comment type="subunit">
    <text evidence="1">Interacts with the Sec translocase complex via SecD. Specifically interacts with transmembrane segments of nascent integral membrane proteins during membrane integration.</text>
</comment>
<comment type="subcellular location">
    <subcellularLocation>
        <location evidence="1">Cell inner membrane</location>
        <topology evidence="1">Multi-pass membrane protein</topology>
    </subcellularLocation>
</comment>
<comment type="similarity">
    <text evidence="1">Belongs to the OXA1/ALB3/YidC family. Type 1 subfamily.</text>
</comment>
<feature type="chain" id="PRO_1000070180" description="Membrane protein insertase YidC">
    <location>
        <begin position="1"/>
        <end position="608"/>
    </location>
</feature>
<feature type="transmembrane region" description="Helical" evidence="1">
    <location>
        <begin position="8"/>
        <end position="28"/>
    </location>
</feature>
<feature type="transmembrane region" description="Helical" evidence="1">
    <location>
        <begin position="378"/>
        <end position="398"/>
    </location>
</feature>
<feature type="transmembrane region" description="Helical" evidence="1">
    <location>
        <begin position="448"/>
        <end position="468"/>
    </location>
</feature>
<feature type="transmembrane region" description="Helical" evidence="1">
    <location>
        <begin position="482"/>
        <end position="502"/>
    </location>
</feature>
<feature type="transmembrane region" description="Helical" evidence="1">
    <location>
        <begin position="506"/>
        <end position="526"/>
    </location>
</feature>
<feature type="transmembrane region" description="Helical" evidence="1">
    <location>
        <begin position="542"/>
        <end position="562"/>
    </location>
</feature>
<feature type="region of interest" description="Disordered" evidence="2">
    <location>
        <begin position="33"/>
        <end position="61"/>
    </location>
</feature>
<evidence type="ECO:0000255" key="1">
    <source>
        <dbReference type="HAMAP-Rule" id="MF_01810"/>
    </source>
</evidence>
<evidence type="ECO:0000256" key="2">
    <source>
        <dbReference type="SAM" id="MobiDB-lite"/>
    </source>
</evidence>
<protein>
    <recommendedName>
        <fullName evidence="1">Membrane protein insertase YidC</fullName>
    </recommendedName>
    <alternativeName>
        <fullName evidence="1">Foldase YidC</fullName>
    </alternativeName>
    <alternativeName>
        <fullName evidence="1">Membrane integrase YidC</fullName>
    </alternativeName>
    <alternativeName>
        <fullName evidence="1">Membrane protein YidC</fullName>
    </alternativeName>
</protein>
<gene>
    <name evidence="1" type="primary">yidC</name>
    <name type="ordered locus">TM1040_0307</name>
</gene>
<dbReference type="EMBL" id="CP000377">
    <property type="protein sequence ID" value="ABF63040.1"/>
    <property type="molecule type" value="Genomic_DNA"/>
</dbReference>
<dbReference type="RefSeq" id="WP_011537656.1">
    <property type="nucleotide sequence ID" value="NC_008044.1"/>
</dbReference>
<dbReference type="SMR" id="Q1GJX6"/>
<dbReference type="STRING" id="292414.TM1040_0307"/>
<dbReference type="KEGG" id="sit:TM1040_0307"/>
<dbReference type="eggNOG" id="COG0706">
    <property type="taxonomic scope" value="Bacteria"/>
</dbReference>
<dbReference type="HOGENOM" id="CLU_016535_1_0_5"/>
<dbReference type="OrthoDB" id="9780552at2"/>
<dbReference type="Proteomes" id="UP000000636">
    <property type="component" value="Chromosome"/>
</dbReference>
<dbReference type="GO" id="GO:0005886">
    <property type="term" value="C:plasma membrane"/>
    <property type="evidence" value="ECO:0007669"/>
    <property type="project" value="UniProtKB-SubCell"/>
</dbReference>
<dbReference type="GO" id="GO:0032977">
    <property type="term" value="F:membrane insertase activity"/>
    <property type="evidence" value="ECO:0007669"/>
    <property type="project" value="InterPro"/>
</dbReference>
<dbReference type="GO" id="GO:0051205">
    <property type="term" value="P:protein insertion into membrane"/>
    <property type="evidence" value="ECO:0007669"/>
    <property type="project" value="TreeGrafter"/>
</dbReference>
<dbReference type="GO" id="GO:0015031">
    <property type="term" value="P:protein transport"/>
    <property type="evidence" value="ECO:0007669"/>
    <property type="project" value="UniProtKB-KW"/>
</dbReference>
<dbReference type="CDD" id="cd20070">
    <property type="entry name" value="5TM_YidC_Alb3"/>
    <property type="match status" value="1"/>
</dbReference>
<dbReference type="CDD" id="cd19961">
    <property type="entry name" value="EcYidC-like_peri"/>
    <property type="match status" value="1"/>
</dbReference>
<dbReference type="FunFam" id="2.70.98.90:FF:000006">
    <property type="entry name" value="Membrane protein insertase YidC"/>
    <property type="match status" value="1"/>
</dbReference>
<dbReference type="Gene3D" id="2.70.98.90">
    <property type="match status" value="1"/>
</dbReference>
<dbReference type="HAMAP" id="MF_01810">
    <property type="entry name" value="YidC_type1"/>
    <property type="match status" value="1"/>
</dbReference>
<dbReference type="InterPro" id="IPR019998">
    <property type="entry name" value="Membr_insert_YidC"/>
</dbReference>
<dbReference type="InterPro" id="IPR028053">
    <property type="entry name" value="Membr_insert_YidC_N"/>
</dbReference>
<dbReference type="InterPro" id="IPR001708">
    <property type="entry name" value="YidC/ALB3/OXA1/COX18"/>
</dbReference>
<dbReference type="InterPro" id="IPR028055">
    <property type="entry name" value="YidC/Oxa/ALB_C"/>
</dbReference>
<dbReference type="InterPro" id="IPR047196">
    <property type="entry name" value="YidC_ALB_C"/>
</dbReference>
<dbReference type="InterPro" id="IPR038221">
    <property type="entry name" value="YidC_periplasmic_sf"/>
</dbReference>
<dbReference type="NCBIfam" id="NF002353">
    <property type="entry name" value="PRK01318.1-4"/>
    <property type="match status" value="1"/>
</dbReference>
<dbReference type="NCBIfam" id="TIGR03593">
    <property type="entry name" value="yidC_nterm"/>
    <property type="match status" value="1"/>
</dbReference>
<dbReference type="NCBIfam" id="TIGR03592">
    <property type="entry name" value="yidC_oxa1_cterm"/>
    <property type="match status" value="1"/>
</dbReference>
<dbReference type="PANTHER" id="PTHR12428:SF65">
    <property type="entry name" value="CYTOCHROME C OXIDASE ASSEMBLY PROTEIN COX18, MITOCHONDRIAL"/>
    <property type="match status" value="1"/>
</dbReference>
<dbReference type="PANTHER" id="PTHR12428">
    <property type="entry name" value="OXA1"/>
    <property type="match status" value="1"/>
</dbReference>
<dbReference type="Pfam" id="PF02096">
    <property type="entry name" value="60KD_IMP"/>
    <property type="match status" value="1"/>
</dbReference>
<dbReference type="Pfam" id="PF14849">
    <property type="entry name" value="YidC_periplas"/>
    <property type="match status" value="1"/>
</dbReference>
<dbReference type="PRINTS" id="PR00701">
    <property type="entry name" value="60KDINNERMP"/>
</dbReference>
<dbReference type="PRINTS" id="PR01900">
    <property type="entry name" value="YIDCPROTEIN"/>
</dbReference>
<sequence>MDDQNKNLLLATALSFLVILGWYFFFPPPEEAPQPATEVTETAPQGDTTAPAAAPSAGAATAEVDAAAAETEITEDVPRLTIDTPRVEGSISLKGGRIDDLRLKDYRETLDDDSPIVTLLSPAGQPHAYYALYGWAPGAGLGIEDVPTANTLWQAEAGATLTPDTPVTLTWDNGKGLTFSREVSIDEDYMFSITQSVTNSSGASVALAPYGTLARHGEPANLENFFVLHEGVVGMADGELSEIDYDDMTDFDPDPRDGSRAQVNTVTENGWIGFTGHYWMSTLIPAPGEAFRAIAKYDERRDIYQTDVVLPTVTLAAGESTSANTQLFAGAKEWATIREYERAGIEGFLDSIDWGWFFFFTKPIFAVLHWLNAAIGNMGVAIIALTFLLKILVFPLAYKSYASMARMKELQPEMEKLRERAGDDRQKMQKEMMELYKREKVNPAAGCLPILIQIPIFFSLYKVIFVTLELRHAAFFGPFQDLSVPDPTSLFNLFGLLPWAAPAPDSLLSLVFIGILPILLGVSMWVQQKLNPAPTDETQRMIFAWMPWVFMFMLGGFASGLVVYWITNNVITFTQQYLIMRSHGYTPDVFGNIKSGFKKDKAEKAEKK</sequence>
<proteinExistence type="inferred from homology"/>
<reference key="1">
    <citation type="submission" date="2006-05" db="EMBL/GenBank/DDBJ databases">
        <title>Complete sequence of chromosome of Silicibacter sp. TM1040.</title>
        <authorList>
            <consortium name="US DOE Joint Genome Institute"/>
            <person name="Copeland A."/>
            <person name="Lucas S."/>
            <person name="Lapidus A."/>
            <person name="Barry K."/>
            <person name="Detter J.C."/>
            <person name="Glavina del Rio T."/>
            <person name="Hammon N."/>
            <person name="Israni S."/>
            <person name="Dalin E."/>
            <person name="Tice H."/>
            <person name="Pitluck S."/>
            <person name="Brettin T."/>
            <person name="Bruce D."/>
            <person name="Han C."/>
            <person name="Tapia R."/>
            <person name="Goodwin L."/>
            <person name="Thompson L.S."/>
            <person name="Gilna P."/>
            <person name="Schmutz J."/>
            <person name="Larimer F."/>
            <person name="Land M."/>
            <person name="Hauser L."/>
            <person name="Kyrpides N."/>
            <person name="Kim E."/>
            <person name="Belas R."/>
            <person name="Moran M.A."/>
            <person name="Buchan A."/>
            <person name="Gonzalez J.M."/>
            <person name="Schell M.A."/>
            <person name="Sun F."/>
            <person name="Richardson P."/>
        </authorList>
    </citation>
    <scope>NUCLEOTIDE SEQUENCE [LARGE SCALE GENOMIC DNA]</scope>
    <source>
        <strain>TM1040</strain>
    </source>
</reference>
<name>YIDC_RUEST</name>
<organism>
    <name type="scientific">Ruegeria sp. (strain TM1040)</name>
    <name type="common">Silicibacter sp.</name>
    <dbReference type="NCBI Taxonomy" id="292414"/>
    <lineage>
        <taxon>Bacteria</taxon>
        <taxon>Pseudomonadati</taxon>
        <taxon>Pseudomonadota</taxon>
        <taxon>Alphaproteobacteria</taxon>
        <taxon>Rhodobacterales</taxon>
        <taxon>Roseobacteraceae</taxon>
        <taxon>Ruegeria</taxon>
    </lineage>
</organism>
<accession>Q1GJX6</accession>
<keyword id="KW-0997">Cell inner membrane</keyword>
<keyword id="KW-1003">Cell membrane</keyword>
<keyword id="KW-0143">Chaperone</keyword>
<keyword id="KW-0472">Membrane</keyword>
<keyword id="KW-0653">Protein transport</keyword>
<keyword id="KW-1185">Reference proteome</keyword>
<keyword id="KW-0812">Transmembrane</keyword>
<keyword id="KW-1133">Transmembrane helix</keyword>
<keyword id="KW-0813">Transport</keyword>